<accession>B0KJ53</accession>
<gene>
    <name evidence="1" type="primary">bioB</name>
    <name type="ordered locus">PputGB1_0392</name>
</gene>
<sequence length="352" mass="38892">MSASTTATTRHDWSLAEVKALFQQPFNDLLFQAQTVHRAHFDPNRVQVSTLLSIKTGACPEDCKYCPQSGHYNTGLEKQKLMEVQKVLEEAARAKAIGSTRFCMGAAWKHPSAKDMPYVLEMVKGVKAMGLETCMTLGKLDQDQTLALAQAGLDYYNHNLDTSPEFYGSIITTRTYGERLQTLAYVRDAGMKICSGGILGMGESLDDRAGLLIQLANLPEHPESVPINMLVKVAGTPLAEEEDVDPFDFIRMLAVARILMPKSHVRLSAGREQMNEQMQALAFMAGANSIFYGEKLLTTANPQADKDMQLFARLGIKPEAREEHADEVHQAAIEQALVEQRSSEMFYNAASA</sequence>
<feature type="chain" id="PRO_0000381562" description="Biotin synthase">
    <location>
        <begin position="1"/>
        <end position="352"/>
    </location>
</feature>
<feature type="domain" description="Radical SAM core" evidence="2">
    <location>
        <begin position="44"/>
        <end position="262"/>
    </location>
</feature>
<feature type="binding site" evidence="1">
    <location>
        <position position="59"/>
    </location>
    <ligand>
        <name>[4Fe-4S] cluster</name>
        <dbReference type="ChEBI" id="CHEBI:49883"/>
        <note>4Fe-4S-S-AdoMet</note>
    </ligand>
</feature>
<feature type="binding site" evidence="1">
    <location>
        <position position="63"/>
    </location>
    <ligand>
        <name>[4Fe-4S] cluster</name>
        <dbReference type="ChEBI" id="CHEBI:49883"/>
        <note>4Fe-4S-S-AdoMet</note>
    </ligand>
</feature>
<feature type="binding site" evidence="1">
    <location>
        <position position="66"/>
    </location>
    <ligand>
        <name>[4Fe-4S] cluster</name>
        <dbReference type="ChEBI" id="CHEBI:49883"/>
        <note>4Fe-4S-S-AdoMet</note>
    </ligand>
</feature>
<feature type="binding site" evidence="1">
    <location>
        <position position="103"/>
    </location>
    <ligand>
        <name>[2Fe-2S] cluster</name>
        <dbReference type="ChEBI" id="CHEBI:190135"/>
    </ligand>
</feature>
<feature type="binding site" evidence="1">
    <location>
        <position position="134"/>
    </location>
    <ligand>
        <name>[2Fe-2S] cluster</name>
        <dbReference type="ChEBI" id="CHEBI:190135"/>
    </ligand>
</feature>
<feature type="binding site" evidence="1">
    <location>
        <position position="194"/>
    </location>
    <ligand>
        <name>[2Fe-2S] cluster</name>
        <dbReference type="ChEBI" id="CHEBI:190135"/>
    </ligand>
</feature>
<feature type="binding site" evidence="1">
    <location>
        <position position="266"/>
    </location>
    <ligand>
        <name>[2Fe-2S] cluster</name>
        <dbReference type="ChEBI" id="CHEBI:190135"/>
    </ligand>
</feature>
<reference key="1">
    <citation type="submission" date="2008-01" db="EMBL/GenBank/DDBJ databases">
        <title>Complete sequence of Pseudomonas putida GB-1.</title>
        <authorList>
            <consortium name="US DOE Joint Genome Institute"/>
            <person name="Copeland A."/>
            <person name="Lucas S."/>
            <person name="Lapidus A."/>
            <person name="Barry K."/>
            <person name="Glavina del Rio T."/>
            <person name="Dalin E."/>
            <person name="Tice H."/>
            <person name="Pitluck S."/>
            <person name="Bruce D."/>
            <person name="Goodwin L."/>
            <person name="Chertkov O."/>
            <person name="Brettin T."/>
            <person name="Detter J.C."/>
            <person name="Han C."/>
            <person name="Kuske C.R."/>
            <person name="Schmutz J."/>
            <person name="Larimer F."/>
            <person name="Land M."/>
            <person name="Hauser L."/>
            <person name="Kyrpides N."/>
            <person name="Kim E."/>
            <person name="McCarthy J.K."/>
            <person name="Richardson P."/>
        </authorList>
    </citation>
    <scope>NUCLEOTIDE SEQUENCE [LARGE SCALE GENOMIC DNA]</scope>
    <source>
        <strain>GB-1</strain>
    </source>
</reference>
<name>BIOB_PSEPG</name>
<organism>
    <name type="scientific">Pseudomonas putida (strain GB-1)</name>
    <dbReference type="NCBI Taxonomy" id="76869"/>
    <lineage>
        <taxon>Bacteria</taxon>
        <taxon>Pseudomonadati</taxon>
        <taxon>Pseudomonadota</taxon>
        <taxon>Gammaproteobacteria</taxon>
        <taxon>Pseudomonadales</taxon>
        <taxon>Pseudomonadaceae</taxon>
        <taxon>Pseudomonas</taxon>
    </lineage>
</organism>
<evidence type="ECO:0000255" key="1">
    <source>
        <dbReference type="HAMAP-Rule" id="MF_01694"/>
    </source>
</evidence>
<evidence type="ECO:0000255" key="2">
    <source>
        <dbReference type="PROSITE-ProRule" id="PRU01266"/>
    </source>
</evidence>
<protein>
    <recommendedName>
        <fullName evidence="1">Biotin synthase</fullName>
        <ecNumber evidence="1">2.8.1.6</ecNumber>
    </recommendedName>
</protein>
<comment type="function">
    <text evidence="1">Catalyzes the conversion of dethiobiotin (DTB) to biotin by the insertion of a sulfur atom into dethiobiotin via a radical-based mechanism.</text>
</comment>
<comment type="catalytic activity">
    <reaction evidence="1">
        <text>(4R,5S)-dethiobiotin + (sulfur carrier)-SH + 2 reduced [2Fe-2S]-[ferredoxin] + 2 S-adenosyl-L-methionine = (sulfur carrier)-H + biotin + 2 5'-deoxyadenosine + 2 L-methionine + 2 oxidized [2Fe-2S]-[ferredoxin]</text>
        <dbReference type="Rhea" id="RHEA:22060"/>
        <dbReference type="Rhea" id="RHEA-COMP:10000"/>
        <dbReference type="Rhea" id="RHEA-COMP:10001"/>
        <dbReference type="Rhea" id="RHEA-COMP:14737"/>
        <dbReference type="Rhea" id="RHEA-COMP:14739"/>
        <dbReference type="ChEBI" id="CHEBI:17319"/>
        <dbReference type="ChEBI" id="CHEBI:29917"/>
        <dbReference type="ChEBI" id="CHEBI:33737"/>
        <dbReference type="ChEBI" id="CHEBI:33738"/>
        <dbReference type="ChEBI" id="CHEBI:57586"/>
        <dbReference type="ChEBI" id="CHEBI:57844"/>
        <dbReference type="ChEBI" id="CHEBI:59789"/>
        <dbReference type="ChEBI" id="CHEBI:64428"/>
        <dbReference type="ChEBI" id="CHEBI:149473"/>
        <dbReference type="EC" id="2.8.1.6"/>
    </reaction>
</comment>
<comment type="cofactor">
    <cofactor evidence="1">
        <name>[4Fe-4S] cluster</name>
        <dbReference type="ChEBI" id="CHEBI:49883"/>
    </cofactor>
    <text evidence="1">Binds 1 [4Fe-4S] cluster. The cluster is coordinated with 3 cysteines and an exchangeable S-adenosyl-L-methionine.</text>
</comment>
<comment type="cofactor">
    <cofactor evidence="1">
        <name>[2Fe-2S] cluster</name>
        <dbReference type="ChEBI" id="CHEBI:190135"/>
    </cofactor>
    <text evidence="1">Binds 1 [2Fe-2S] cluster. The cluster is coordinated with 3 cysteines and 1 arginine.</text>
</comment>
<comment type="pathway">
    <text evidence="1">Cofactor biosynthesis; biotin biosynthesis; biotin from 7,8-diaminononanoate: step 2/2.</text>
</comment>
<comment type="subunit">
    <text evidence="1">Homodimer.</text>
</comment>
<comment type="similarity">
    <text evidence="1">Belongs to the radical SAM superfamily. Biotin synthase family.</text>
</comment>
<proteinExistence type="inferred from homology"/>
<dbReference type="EC" id="2.8.1.6" evidence="1"/>
<dbReference type="EMBL" id="CP000926">
    <property type="protein sequence ID" value="ABY96303.1"/>
    <property type="molecule type" value="Genomic_DNA"/>
</dbReference>
<dbReference type="RefSeq" id="WP_012270162.1">
    <property type="nucleotide sequence ID" value="NC_010322.1"/>
</dbReference>
<dbReference type="SMR" id="B0KJ53"/>
<dbReference type="KEGG" id="ppg:PputGB1_0392"/>
<dbReference type="eggNOG" id="COG0502">
    <property type="taxonomic scope" value="Bacteria"/>
</dbReference>
<dbReference type="HOGENOM" id="CLU_033172_1_2_6"/>
<dbReference type="UniPathway" id="UPA00078">
    <property type="reaction ID" value="UER00162"/>
</dbReference>
<dbReference type="Proteomes" id="UP000002157">
    <property type="component" value="Chromosome"/>
</dbReference>
<dbReference type="GO" id="GO:0051537">
    <property type="term" value="F:2 iron, 2 sulfur cluster binding"/>
    <property type="evidence" value="ECO:0007669"/>
    <property type="project" value="UniProtKB-KW"/>
</dbReference>
<dbReference type="GO" id="GO:0051539">
    <property type="term" value="F:4 iron, 4 sulfur cluster binding"/>
    <property type="evidence" value="ECO:0007669"/>
    <property type="project" value="UniProtKB-KW"/>
</dbReference>
<dbReference type="GO" id="GO:0004076">
    <property type="term" value="F:biotin synthase activity"/>
    <property type="evidence" value="ECO:0007669"/>
    <property type="project" value="UniProtKB-UniRule"/>
</dbReference>
<dbReference type="GO" id="GO:0005506">
    <property type="term" value="F:iron ion binding"/>
    <property type="evidence" value="ECO:0007669"/>
    <property type="project" value="UniProtKB-UniRule"/>
</dbReference>
<dbReference type="GO" id="GO:0009102">
    <property type="term" value="P:biotin biosynthetic process"/>
    <property type="evidence" value="ECO:0007669"/>
    <property type="project" value="UniProtKB-UniRule"/>
</dbReference>
<dbReference type="CDD" id="cd01335">
    <property type="entry name" value="Radical_SAM"/>
    <property type="match status" value="1"/>
</dbReference>
<dbReference type="FunFam" id="3.20.20.70:FF:000011">
    <property type="entry name" value="Biotin synthase"/>
    <property type="match status" value="1"/>
</dbReference>
<dbReference type="Gene3D" id="3.20.20.70">
    <property type="entry name" value="Aldolase class I"/>
    <property type="match status" value="1"/>
</dbReference>
<dbReference type="HAMAP" id="MF_01694">
    <property type="entry name" value="BioB"/>
    <property type="match status" value="1"/>
</dbReference>
<dbReference type="InterPro" id="IPR013785">
    <property type="entry name" value="Aldolase_TIM"/>
</dbReference>
<dbReference type="InterPro" id="IPR010722">
    <property type="entry name" value="BATS_dom"/>
</dbReference>
<dbReference type="InterPro" id="IPR002684">
    <property type="entry name" value="Biotin_synth/BioAB"/>
</dbReference>
<dbReference type="InterPro" id="IPR024177">
    <property type="entry name" value="Biotin_synthase"/>
</dbReference>
<dbReference type="InterPro" id="IPR006638">
    <property type="entry name" value="Elp3/MiaA/NifB-like_rSAM"/>
</dbReference>
<dbReference type="InterPro" id="IPR007197">
    <property type="entry name" value="rSAM"/>
</dbReference>
<dbReference type="NCBIfam" id="TIGR00433">
    <property type="entry name" value="bioB"/>
    <property type="match status" value="1"/>
</dbReference>
<dbReference type="PANTHER" id="PTHR22976">
    <property type="entry name" value="BIOTIN SYNTHASE"/>
    <property type="match status" value="1"/>
</dbReference>
<dbReference type="PANTHER" id="PTHR22976:SF2">
    <property type="entry name" value="BIOTIN SYNTHASE, MITOCHONDRIAL"/>
    <property type="match status" value="1"/>
</dbReference>
<dbReference type="Pfam" id="PF06968">
    <property type="entry name" value="BATS"/>
    <property type="match status" value="1"/>
</dbReference>
<dbReference type="Pfam" id="PF04055">
    <property type="entry name" value="Radical_SAM"/>
    <property type="match status" value="1"/>
</dbReference>
<dbReference type="PIRSF" id="PIRSF001619">
    <property type="entry name" value="Biotin_synth"/>
    <property type="match status" value="1"/>
</dbReference>
<dbReference type="SFLD" id="SFLDF00272">
    <property type="entry name" value="biotin_synthase"/>
    <property type="match status" value="1"/>
</dbReference>
<dbReference type="SFLD" id="SFLDG01278">
    <property type="entry name" value="biotin_synthase_like"/>
    <property type="match status" value="1"/>
</dbReference>
<dbReference type="SMART" id="SM00876">
    <property type="entry name" value="BATS"/>
    <property type="match status" value="1"/>
</dbReference>
<dbReference type="SMART" id="SM00729">
    <property type="entry name" value="Elp3"/>
    <property type="match status" value="1"/>
</dbReference>
<dbReference type="SUPFAM" id="SSF102114">
    <property type="entry name" value="Radical SAM enzymes"/>
    <property type="match status" value="1"/>
</dbReference>
<dbReference type="PROSITE" id="PS51918">
    <property type="entry name" value="RADICAL_SAM"/>
    <property type="match status" value="1"/>
</dbReference>
<keyword id="KW-0001">2Fe-2S</keyword>
<keyword id="KW-0004">4Fe-4S</keyword>
<keyword id="KW-0093">Biotin biosynthesis</keyword>
<keyword id="KW-0408">Iron</keyword>
<keyword id="KW-0411">Iron-sulfur</keyword>
<keyword id="KW-0479">Metal-binding</keyword>
<keyword id="KW-0949">S-adenosyl-L-methionine</keyword>
<keyword id="KW-0808">Transferase</keyword>